<accession>Q3B6E6</accession>
<dbReference type="EMBL" id="CP000096">
    <property type="protein sequence ID" value="ABB23085.1"/>
    <property type="molecule type" value="Genomic_DNA"/>
</dbReference>
<dbReference type="RefSeq" id="WP_011356961.1">
    <property type="nucleotide sequence ID" value="NC_007512.1"/>
</dbReference>
<dbReference type="SMR" id="Q3B6E6"/>
<dbReference type="STRING" id="319225.Plut_0197"/>
<dbReference type="KEGG" id="plt:Plut_0197"/>
<dbReference type="eggNOG" id="COG0256">
    <property type="taxonomic scope" value="Bacteria"/>
</dbReference>
<dbReference type="HOGENOM" id="CLU_098841_0_1_10"/>
<dbReference type="OrthoDB" id="9810939at2"/>
<dbReference type="Proteomes" id="UP000002709">
    <property type="component" value="Chromosome"/>
</dbReference>
<dbReference type="GO" id="GO:0022625">
    <property type="term" value="C:cytosolic large ribosomal subunit"/>
    <property type="evidence" value="ECO:0007669"/>
    <property type="project" value="TreeGrafter"/>
</dbReference>
<dbReference type="GO" id="GO:0008097">
    <property type="term" value="F:5S rRNA binding"/>
    <property type="evidence" value="ECO:0007669"/>
    <property type="project" value="TreeGrafter"/>
</dbReference>
<dbReference type="GO" id="GO:0003735">
    <property type="term" value="F:structural constituent of ribosome"/>
    <property type="evidence" value="ECO:0007669"/>
    <property type="project" value="InterPro"/>
</dbReference>
<dbReference type="GO" id="GO:0006412">
    <property type="term" value="P:translation"/>
    <property type="evidence" value="ECO:0007669"/>
    <property type="project" value="UniProtKB-UniRule"/>
</dbReference>
<dbReference type="CDD" id="cd00432">
    <property type="entry name" value="Ribosomal_L18_L5e"/>
    <property type="match status" value="1"/>
</dbReference>
<dbReference type="FunFam" id="3.30.420.100:FF:000001">
    <property type="entry name" value="50S ribosomal protein L18"/>
    <property type="match status" value="1"/>
</dbReference>
<dbReference type="Gene3D" id="3.30.420.100">
    <property type="match status" value="1"/>
</dbReference>
<dbReference type="HAMAP" id="MF_01337_B">
    <property type="entry name" value="Ribosomal_uL18_B"/>
    <property type="match status" value="1"/>
</dbReference>
<dbReference type="InterPro" id="IPR004389">
    <property type="entry name" value="Ribosomal_uL18_bac-type"/>
</dbReference>
<dbReference type="InterPro" id="IPR005484">
    <property type="entry name" value="Ribosomal_uL18_bac/euk"/>
</dbReference>
<dbReference type="NCBIfam" id="TIGR00060">
    <property type="entry name" value="L18_bact"/>
    <property type="match status" value="1"/>
</dbReference>
<dbReference type="PANTHER" id="PTHR12899">
    <property type="entry name" value="39S RIBOSOMAL PROTEIN L18, MITOCHONDRIAL"/>
    <property type="match status" value="1"/>
</dbReference>
<dbReference type="PANTHER" id="PTHR12899:SF3">
    <property type="entry name" value="LARGE RIBOSOMAL SUBUNIT PROTEIN UL18M"/>
    <property type="match status" value="1"/>
</dbReference>
<dbReference type="Pfam" id="PF00861">
    <property type="entry name" value="Ribosomal_L18p"/>
    <property type="match status" value="1"/>
</dbReference>
<dbReference type="SUPFAM" id="SSF53137">
    <property type="entry name" value="Translational machinery components"/>
    <property type="match status" value="1"/>
</dbReference>
<organism>
    <name type="scientific">Chlorobium luteolum (strain DSM 273 / BCRC 81028 / 2530)</name>
    <name type="common">Pelodictyon luteolum</name>
    <dbReference type="NCBI Taxonomy" id="319225"/>
    <lineage>
        <taxon>Bacteria</taxon>
        <taxon>Pseudomonadati</taxon>
        <taxon>Chlorobiota</taxon>
        <taxon>Chlorobiia</taxon>
        <taxon>Chlorobiales</taxon>
        <taxon>Chlorobiaceae</taxon>
        <taxon>Chlorobium/Pelodictyon group</taxon>
        <taxon>Pelodictyon</taxon>
    </lineage>
</organism>
<name>RL18_CHLL3</name>
<proteinExistence type="inferred from homology"/>
<keyword id="KW-1185">Reference proteome</keyword>
<keyword id="KW-0687">Ribonucleoprotein</keyword>
<keyword id="KW-0689">Ribosomal protein</keyword>
<keyword id="KW-0694">RNA-binding</keyword>
<keyword id="KW-0699">rRNA-binding</keyword>
<feature type="chain" id="PRO_0000251341" description="Large ribosomal subunit protein uL18">
    <location>
        <begin position="1"/>
        <end position="119"/>
    </location>
</feature>
<evidence type="ECO:0000255" key="1">
    <source>
        <dbReference type="HAMAP-Rule" id="MF_01337"/>
    </source>
</evidence>
<evidence type="ECO:0000305" key="2"/>
<protein>
    <recommendedName>
        <fullName evidence="1">Large ribosomal subunit protein uL18</fullName>
    </recommendedName>
    <alternativeName>
        <fullName evidence="2">50S ribosomal protein L18</fullName>
    </alternativeName>
</protein>
<sequence length="119" mass="13304">MSKIDKASRRQKIKDRSRFSVAGTQEKPRLCVYRSLSQIYAQLIDDSGKKTIMAVSSMSKENKELKGSKTEVCHRVGKQIAEKALANGITNVVFDRNGFRYHGRIKALADGAREAGLIF</sequence>
<gene>
    <name evidence="1" type="primary">rplR</name>
    <name type="ordered locus">Plut_0197</name>
</gene>
<comment type="function">
    <text evidence="1">This is one of the proteins that bind and probably mediate the attachment of the 5S RNA into the large ribosomal subunit, where it forms part of the central protuberance.</text>
</comment>
<comment type="subunit">
    <text evidence="1">Part of the 50S ribosomal subunit; part of the 5S rRNA/L5/L18/L25 subcomplex. Contacts the 5S and 23S rRNAs.</text>
</comment>
<comment type="similarity">
    <text evidence="1">Belongs to the universal ribosomal protein uL18 family.</text>
</comment>
<reference key="1">
    <citation type="submission" date="2005-08" db="EMBL/GenBank/DDBJ databases">
        <title>Complete sequence of Pelodictyon luteolum DSM 273.</title>
        <authorList>
            <consortium name="US DOE Joint Genome Institute"/>
            <person name="Copeland A."/>
            <person name="Lucas S."/>
            <person name="Lapidus A."/>
            <person name="Barry K."/>
            <person name="Detter J.C."/>
            <person name="Glavina T."/>
            <person name="Hammon N."/>
            <person name="Israni S."/>
            <person name="Pitluck S."/>
            <person name="Bryant D."/>
            <person name="Schmutz J."/>
            <person name="Larimer F."/>
            <person name="Land M."/>
            <person name="Kyrpides N."/>
            <person name="Ivanova N."/>
            <person name="Richardson P."/>
        </authorList>
    </citation>
    <scope>NUCLEOTIDE SEQUENCE [LARGE SCALE GENOMIC DNA]</scope>
    <source>
        <strain>DSM 273 / BCRC 81028 / 2530</strain>
    </source>
</reference>